<organism>
    <name type="scientific">Photobacterium profundum (strain SS9)</name>
    <dbReference type="NCBI Taxonomy" id="298386"/>
    <lineage>
        <taxon>Bacteria</taxon>
        <taxon>Pseudomonadati</taxon>
        <taxon>Pseudomonadota</taxon>
        <taxon>Gammaproteobacteria</taxon>
        <taxon>Vibrionales</taxon>
        <taxon>Vibrionaceae</taxon>
        <taxon>Photobacterium</taxon>
    </lineage>
</organism>
<name>GPH_PHOPR</name>
<reference key="1">
    <citation type="journal article" date="2005" name="Science">
        <title>Life at depth: Photobacterium profundum genome sequence and expression analysis.</title>
        <authorList>
            <person name="Vezzi A."/>
            <person name="Campanaro S."/>
            <person name="D'Angelo M."/>
            <person name="Simonato F."/>
            <person name="Vitulo N."/>
            <person name="Lauro F.M."/>
            <person name="Cestaro A."/>
            <person name="Malacrida G."/>
            <person name="Simionati B."/>
            <person name="Cannata N."/>
            <person name="Romualdi C."/>
            <person name="Bartlett D.H."/>
            <person name="Valle G."/>
        </authorList>
    </citation>
    <scope>NUCLEOTIDE SEQUENCE [LARGE SCALE GENOMIC DNA]</scope>
    <source>
        <strain>ATCC BAA-1253 / SS9</strain>
    </source>
</reference>
<accession>Q6LVF1</accession>
<dbReference type="EC" id="3.1.3.18" evidence="1"/>
<dbReference type="EMBL" id="CR378663">
    <property type="protein sequence ID" value="CAG18724.1"/>
    <property type="molecule type" value="Genomic_DNA"/>
</dbReference>
<dbReference type="RefSeq" id="WP_011217098.1">
    <property type="nucleotide sequence ID" value="NC_006370.1"/>
</dbReference>
<dbReference type="SMR" id="Q6LVF1"/>
<dbReference type="STRING" id="298386.PBPRA0285"/>
<dbReference type="KEGG" id="ppr:PBPRA0285"/>
<dbReference type="eggNOG" id="COG0546">
    <property type="taxonomic scope" value="Bacteria"/>
</dbReference>
<dbReference type="HOGENOM" id="CLU_045011_19_1_6"/>
<dbReference type="UniPathway" id="UPA00865">
    <property type="reaction ID" value="UER00834"/>
</dbReference>
<dbReference type="Proteomes" id="UP000000593">
    <property type="component" value="Chromosome 1"/>
</dbReference>
<dbReference type="GO" id="GO:0005829">
    <property type="term" value="C:cytosol"/>
    <property type="evidence" value="ECO:0007669"/>
    <property type="project" value="TreeGrafter"/>
</dbReference>
<dbReference type="GO" id="GO:0046872">
    <property type="term" value="F:metal ion binding"/>
    <property type="evidence" value="ECO:0007669"/>
    <property type="project" value="UniProtKB-KW"/>
</dbReference>
<dbReference type="GO" id="GO:0008967">
    <property type="term" value="F:phosphoglycolate phosphatase activity"/>
    <property type="evidence" value="ECO:0007669"/>
    <property type="project" value="UniProtKB-UniRule"/>
</dbReference>
<dbReference type="GO" id="GO:0005975">
    <property type="term" value="P:carbohydrate metabolic process"/>
    <property type="evidence" value="ECO:0007669"/>
    <property type="project" value="InterPro"/>
</dbReference>
<dbReference type="GO" id="GO:0006281">
    <property type="term" value="P:DNA repair"/>
    <property type="evidence" value="ECO:0007669"/>
    <property type="project" value="TreeGrafter"/>
</dbReference>
<dbReference type="GO" id="GO:0046295">
    <property type="term" value="P:glycolate biosynthetic process"/>
    <property type="evidence" value="ECO:0007669"/>
    <property type="project" value="UniProtKB-UniRule"/>
</dbReference>
<dbReference type="CDD" id="cd16417">
    <property type="entry name" value="HAD_PGPase"/>
    <property type="match status" value="1"/>
</dbReference>
<dbReference type="FunFam" id="3.40.50.1000:FF:000022">
    <property type="entry name" value="Phosphoglycolate phosphatase"/>
    <property type="match status" value="1"/>
</dbReference>
<dbReference type="Gene3D" id="3.40.50.1000">
    <property type="entry name" value="HAD superfamily/HAD-like"/>
    <property type="match status" value="1"/>
</dbReference>
<dbReference type="Gene3D" id="1.10.150.240">
    <property type="entry name" value="Putative phosphatase, domain 2"/>
    <property type="match status" value="1"/>
</dbReference>
<dbReference type="HAMAP" id="MF_00495">
    <property type="entry name" value="GPH_hydrolase_bact"/>
    <property type="match status" value="1"/>
</dbReference>
<dbReference type="InterPro" id="IPR050155">
    <property type="entry name" value="HAD-like_hydrolase_sf"/>
</dbReference>
<dbReference type="InterPro" id="IPR036412">
    <property type="entry name" value="HAD-like_sf"/>
</dbReference>
<dbReference type="InterPro" id="IPR006439">
    <property type="entry name" value="HAD-SF_hydro_IA"/>
</dbReference>
<dbReference type="InterPro" id="IPR041492">
    <property type="entry name" value="HAD_2"/>
</dbReference>
<dbReference type="InterPro" id="IPR023214">
    <property type="entry name" value="HAD_sf"/>
</dbReference>
<dbReference type="InterPro" id="IPR023198">
    <property type="entry name" value="PGP-like_dom2"/>
</dbReference>
<dbReference type="InterPro" id="IPR037512">
    <property type="entry name" value="PGPase_prok"/>
</dbReference>
<dbReference type="NCBIfam" id="TIGR01549">
    <property type="entry name" value="HAD-SF-IA-v1"/>
    <property type="match status" value="1"/>
</dbReference>
<dbReference type="NCBIfam" id="TIGR01509">
    <property type="entry name" value="HAD-SF-IA-v3"/>
    <property type="match status" value="1"/>
</dbReference>
<dbReference type="NCBIfam" id="TIGR01449">
    <property type="entry name" value="PGP_bact"/>
    <property type="match status" value="1"/>
</dbReference>
<dbReference type="NCBIfam" id="NF009695">
    <property type="entry name" value="PRK13222.1-2"/>
    <property type="match status" value="1"/>
</dbReference>
<dbReference type="PANTHER" id="PTHR43434">
    <property type="entry name" value="PHOSPHOGLYCOLATE PHOSPHATASE"/>
    <property type="match status" value="1"/>
</dbReference>
<dbReference type="PANTHER" id="PTHR43434:SF1">
    <property type="entry name" value="PHOSPHOGLYCOLATE PHOSPHATASE"/>
    <property type="match status" value="1"/>
</dbReference>
<dbReference type="Pfam" id="PF13419">
    <property type="entry name" value="HAD_2"/>
    <property type="match status" value="1"/>
</dbReference>
<dbReference type="PRINTS" id="PR00413">
    <property type="entry name" value="HADHALOGNASE"/>
</dbReference>
<dbReference type="SFLD" id="SFLDG01135">
    <property type="entry name" value="C1.5.6:_HAD__Beta-PGM__Phospha"/>
    <property type="match status" value="1"/>
</dbReference>
<dbReference type="SFLD" id="SFLDG01129">
    <property type="entry name" value="C1.5:_HAD__Beta-PGM__Phosphata"/>
    <property type="match status" value="1"/>
</dbReference>
<dbReference type="SUPFAM" id="SSF56784">
    <property type="entry name" value="HAD-like"/>
    <property type="match status" value="1"/>
</dbReference>
<protein>
    <recommendedName>
        <fullName evidence="1">Phosphoglycolate phosphatase</fullName>
        <shortName evidence="1">PGP</shortName>
        <shortName evidence="1">PGPase</shortName>
        <ecNumber evidence="1">3.1.3.18</ecNumber>
    </recommendedName>
</protein>
<comment type="function">
    <text evidence="1">Specifically catalyzes the dephosphorylation of 2-phosphoglycolate. Is involved in the dissimilation of the intracellular 2-phosphoglycolate formed during the DNA repair of 3'-phosphoglycolate ends, a major class of DNA lesions induced by oxidative stress.</text>
</comment>
<comment type="catalytic activity">
    <reaction evidence="1">
        <text>2-phosphoglycolate + H2O = glycolate + phosphate</text>
        <dbReference type="Rhea" id="RHEA:14369"/>
        <dbReference type="ChEBI" id="CHEBI:15377"/>
        <dbReference type="ChEBI" id="CHEBI:29805"/>
        <dbReference type="ChEBI" id="CHEBI:43474"/>
        <dbReference type="ChEBI" id="CHEBI:58033"/>
        <dbReference type="EC" id="3.1.3.18"/>
    </reaction>
</comment>
<comment type="cofactor">
    <cofactor evidence="1">
        <name>Mg(2+)</name>
        <dbReference type="ChEBI" id="CHEBI:18420"/>
    </cofactor>
</comment>
<comment type="pathway">
    <text evidence="1">Organic acid metabolism; glycolate biosynthesis; glycolate from 2-phosphoglycolate: step 1/1.</text>
</comment>
<comment type="similarity">
    <text evidence="1">Belongs to the HAD-like hydrolase superfamily. CbbY/CbbZ/Gph/YieH family.</text>
</comment>
<sequence>MKQFEGIKFIAFDLDGTLLDSVPDLAEAADKAMQALGRDRVTVEQVTTWIGNGADILIGRALSQSIELDPELDLALHQEARALFDRFYDEGGHKQSHLYAGVKETLAAFHQANIPMAIVTNKPAQFVPHLLEQHGISEYFVDVIGGDTFPLKKPDPFALHWLMEKHQLAACEMLMIGDSRNDILAAQAATCHVVGLTYGYNYGQPISASNPDVVLDQFSQLIDVVKLAC</sequence>
<evidence type="ECO:0000255" key="1">
    <source>
        <dbReference type="HAMAP-Rule" id="MF_00495"/>
    </source>
</evidence>
<keyword id="KW-0119">Carbohydrate metabolism</keyword>
<keyword id="KW-0378">Hydrolase</keyword>
<keyword id="KW-0460">Magnesium</keyword>
<keyword id="KW-0479">Metal-binding</keyword>
<keyword id="KW-1185">Reference proteome</keyword>
<feature type="chain" id="PRO_0000238164" description="Phosphoglycolate phosphatase">
    <location>
        <begin position="1"/>
        <end position="229"/>
    </location>
</feature>
<feature type="active site" description="Nucleophile" evidence="1">
    <location>
        <position position="13"/>
    </location>
</feature>
<feature type="binding site" evidence="1">
    <location>
        <position position="13"/>
    </location>
    <ligand>
        <name>Mg(2+)</name>
        <dbReference type="ChEBI" id="CHEBI:18420"/>
    </ligand>
</feature>
<feature type="binding site" evidence="1">
    <location>
        <position position="15"/>
    </location>
    <ligand>
        <name>Mg(2+)</name>
        <dbReference type="ChEBI" id="CHEBI:18420"/>
    </ligand>
</feature>
<feature type="binding site" evidence="1">
    <location>
        <position position="178"/>
    </location>
    <ligand>
        <name>Mg(2+)</name>
        <dbReference type="ChEBI" id="CHEBI:18420"/>
    </ligand>
</feature>
<gene>
    <name type="ordered locus">PBPRA0285</name>
</gene>
<proteinExistence type="inferred from homology"/>